<name>ECFA1_STRPN</name>
<dbReference type="EC" id="7.-.-.-" evidence="1"/>
<dbReference type="EMBL" id="AE005672">
    <property type="protein sequence ID" value="AAK76269.1"/>
    <property type="molecule type" value="Genomic_DNA"/>
</dbReference>
<dbReference type="PIR" id="D95259">
    <property type="entry name" value="D95259"/>
</dbReference>
<dbReference type="RefSeq" id="WP_000835715.1">
    <property type="nucleotide sequence ID" value="NZ_CP155539.1"/>
</dbReference>
<dbReference type="SMR" id="Q97N50"/>
<dbReference type="PaxDb" id="170187-SP_2221"/>
<dbReference type="EnsemblBacteria" id="AAK76269">
    <property type="protein sequence ID" value="AAK76269"/>
    <property type="gene ID" value="SP_2221"/>
</dbReference>
<dbReference type="KEGG" id="spn:SP_2221"/>
<dbReference type="eggNOG" id="COG1122">
    <property type="taxonomic scope" value="Bacteria"/>
</dbReference>
<dbReference type="PhylomeDB" id="Q97N50"/>
<dbReference type="BioCyc" id="SPNE170187:G1FZB-2321-MONOMER"/>
<dbReference type="Proteomes" id="UP000000585">
    <property type="component" value="Chromosome"/>
</dbReference>
<dbReference type="GO" id="GO:0043190">
    <property type="term" value="C:ATP-binding cassette (ABC) transporter complex"/>
    <property type="evidence" value="ECO:0007669"/>
    <property type="project" value="TreeGrafter"/>
</dbReference>
<dbReference type="GO" id="GO:0005524">
    <property type="term" value="F:ATP binding"/>
    <property type="evidence" value="ECO:0007669"/>
    <property type="project" value="UniProtKB-KW"/>
</dbReference>
<dbReference type="GO" id="GO:0016887">
    <property type="term" value="F:ATP hydrolysis activity"/>
    <property type="evidence" value="ECO:0007669"/>
    <property type="project" value="InterPro"/>
</dbReference>
<dbReference type="GO" id="GO:0042626">
    <property type="term" value="F:ATPase-coupled transmembrane transporter activity"/>
    <property type="evidence" value="ECO:0007669"/>
    <property type="project" value="TreeGrafter"/>
</dbReference>
<dbReference type="CDD" id="cd03225">
    <property type="entry name" value="ABC_cobalt_CbiO_domain1"/>
    <property type="match status" value="1"/>
</dbReference>
<dbReference type="FunFam" id="3.40.50.300:FF:000224">
    <property type="entry name" value="Energy-coupling factor transporter ATP-binding protein EcfA"/>
    <property type="match status" value="1"/>
</dbReference>
<dbReference type="Gene3D" id="3.40.50.300">
    <property type="entry name" value="P-loop containing nucleotide triphosphate hydrolases"/>
    <property type="match status" value="1"/>
</dbReference>
<dbReference type="InterPro" id="IPR003593">
    <property type="entry name" value="AAA+_ATPase"/>
</dbReference>
<dbReference type="InterPro" id="IPR003439">
    <property type="entry name" value="ABC_transporter-like_ATP-bd"/>
</dbReference>
<dbReference type="InterPro" id="IPR017871">
    <property type="entry name" value="ABC_transporter-like_CS"/>
</dbReference>
<dbReference type="InterPro" id="IPR015856">
    <property type="entry name" value="ABC_transpr_CbiO/EcfA_su"/>
</dbReference>
<dbReference type="InterPro" id="IPR050095">
    <property type="entry name" value="ECF_ABC_transporter_ATP-bd"/>
</dbReference>
<dbReference type="InterPro" id="IPR030947">
    <property type="entry name" value="EcfA_1"/>
</dbReference>
<dbReference type="InterPro" id="IPR027417">
    <property type="entry name" value="P-loop_NTPase"/>
</dbReference>
<dbReference type="NCBIfam" id="TIGR04520">
    <property type="entry name" value="ECF_ATPase_1"/>
    <property type="match status" value="1"/>
</dbReference>
<dbReference type="NCBIfam" id="NF010156">
    <property type="entry name" value="PRK13635.1"/>
    <property type="match status" value="1"/>
</dbReference>
<dbReference type="NCBIfam" id="NF010167">
    <property type="entry name" value="PRK13648.1"/>
    <property type="match status" value="1"/>
</dbReference>
<dbReference type="PANTHER" id="PTHR43553:SF24">
    <property type="entry name" value="ENERGY-COUPLING FACTOR TRANSPORTER ATP-BINDING PROTEIN ECFA1"/>
    <property type="match status" value="1"/>
</dbReference>
<dbReference type="PANTHER" id="PTHR43553">
    <property type="entry name" value="HEAVY METAL TRANSPORTER"/>
    <property type="match status" value="1"/>
</dbReference>
<dbReference type="Pfam" id="PF00005">
    <property type="entry name" value="ABC_tran"/>
    <property type="match status" value="1"/>
</dbReference>
<dbReference type="SMART" id="SM00382">
    <property type="entry name" value="AAA"/>
    <property type="match status" value="1"/>
</dbReference>
<dbReference type="SUPFAM" id="SSF52540">
    <property type="entry name" value="P-loop containing nucleoside triphosphate hydrolases"/>
    <property type="match status" value="1"/>
</dbReference>
<dbReference type="PROSITE" id="PS00211">
    <property type="entry name" value="ABC_TRANSPORTER_1"/>
    <property type="match status" value="1"/>
</dbReference>
<dbReference type="PROSITE" id="PS50893">
    <property type="entry name" value="ABC_TRANSPORTER_2"/>
    <property type="match status" value="1"/>
</dbReference>
<dbReference type="PROSITE" id="PS51246">
    <property type="entry name" value="CBIO"/>
    <property type="match status" value="1"/>
</dbReference>
<feature type="chain" id="PRO_0000092099" description="Energy-coupling factor transporter ATP-binding protein EcfA1">
    <location>
        <begin position="1"/>
        <end position="275"/>
    </location>
</feature>
<feature type="domain" description="ABC transporter" evidence="1">
    <location>
        <begin position="5"/>
        <end position="240"/>
    </location>
</feature>
<feature type="binding site" evidence="1">
    <location>
        <begin position="40"/>
        <end position="47"/>
    </location>
    <ligand>
        <name>ATP</name>
        <dbReference type="ChEBI" id="CHEBI:30616"/>
    </ligand>
</feature>
<keyword id="KW-0067">ATP-binding</keyword>
<keyword id="KW-1003">Cell membrane</keyword>
<keyword id="KW-0472">Membrane</keyword>
<keyword id="KW-0547">Nucleotide-binding</keyword>
<keyword id="KW-1185">Reference proteome</keyword>
<keyword id="KW-1278">Translocase</keyword>
<keyword id="KW-0813">Transport</keyword>
<organism>
    <name type="scientific">Streptococcus pneumoniae serotype 4 (strain ATCC BAA-334 / TIGR4)</name>
    <dbReference type="NCBI Taxonomy" id="170187"/>
    <lineage>
        <taxon>Bacteria</taxon>
        <taxon>Bacillati</taxon>
        <taxon>Bacillota</taxon>
        <taxon>Bacilli</taxon>
        <taxon>Lactobacillales</taxon>
        <taxon>Streptococcaceae</taxon>
        <taxon>Streptococcus</taxon>
    </lineage>
</organism>
<accession>Q97N50</accession>
<sequence>MKSIIDVKNLSFRYKENQNYYDVKDITFHVKRGEWLSIVGHNGSGKSTTVRLIDGLLEAESGEIVIDGQRLTEENVWNIRRQIGMVFQNPDNQFVGATVEDDVAFGLENQGLSRQEMKKRVEEALALVGMLDFKKREPARLSGGQKQRVAIAGVVALRPAILILDEATSMLDPEGRRELIGTVKGIRKDYDMTVISITHDLEEVAMSDRVLVMKKGEIESTSSPRELFSRNDLDQIGLDDPFANQLKKSLSQNGYDLPENYLTESELEDKLWELL</sequence>
<protein>
    <recommendedName>
        <fullName evidence="1">Energy-coupling factor transporter ATP-binding protein EcfA1</fullName>
        <shortName evidence="1">ECF transporter A component EcfA1</shortName>
        <ecNumber evidence="1">7.-.-.-</ecNumber>
    </recommendedName>
</protein>
<proteinExistence type="inferred from homology"/>
<evidence type="ECO:0000255" key="1">
    <source>
        <dbReference type="HAMAP-Rule" id="MF_01710"/>
    </source>
</evidence>
<reference key="1">
    <citation type="journal article" date="2001" name="Science">
        <title>Complete genome sequence of a virulent isolate of Streptococcus pneumoniae.</title>
        <authorList>
            <person name="Tettelin H."/>
            <person name="Nelson K.E."/>
            <person name="Paulsen I.T."/>
            <person name="Eisen J.A."/>
            <person name="Read T.D."/>
            <person name="Peterson S.N."/>
            <person name="Heidelberg J.F."/>
            <person name="DeBoy R.T."/>
            <person name="Haft D.H."/>
            <person name="Dodson R.J."/>
            <person name="Durkin A.S."/>
            <person name="Gwinn M.L."/>
            <person name="Kolonay J.F."/>
            <person name="Nelson W.C."/>
            <person name="Peterson J.D."/>
            <person name="Umayam L.A."/>
            <person name="White O."/>
            <person name="Salzberg S.L."/>
            <person name="Lewis M.R."/>
            <person name="Radune D."/>
            <person name="Holtzapple E.K."/>
            <person name="Khouri H.M."/>
            <person name="Wolf A.M."/>
            <person name="Utterback T.R."/>
            <person name="Hansen C.L."/>
            <person name="McDonald L.A."/>
            <person name="Feldblyum T.V."/>
            <person name="Angiuoli S.V."/>
            <person name="Dickinson T."/>
            <person name="Hickey E.K."/>
            <person name="Holt I.E."/>
            <person name="Loftus B.J."/>
            <person name="Yang F."/>
            <person name="Smith H.O."/>
            <person name="Venter J.C."/>
            <person name="Dougherty B.A."/>
            <person name="Morrison D.A."/>
            <person name="Hollingshead S.K."/>
            <person name="Fraser C.M."/>
        </authorList>
    </citation>
    <scope>NUCLEOTIDE SEQUENCE [LARGE SCALE GENOMIC DNA]</scope>
    <source>
        <strain>ATCC BAA-334 / TIGR4</strain>
    </source>
</reference>
<gene>
    <name evidence="1" type="primary">ecfA1</name>
    <name type="synonym">cbiO1</name>
    <name type="ordered locus">SP_2221</name>
</gene>
<comment type="function">
    <text evidence="1">ATP-binding (A) component of a common energy-coupling factor (ECF) ABC-transporter complex. Unlike classic ABC transporters this ECF transporter provides the energy necessary to transport a number of different substrates.</text>
</comment>
<comment type="subunit">
    <text evidence="1">Forms a stable energy-coupling factor (ECF) transporter complex composed of 2 membrane-embedded substrate-binding proteins (S component), 2 ATP-binding proteins (A component) and 2 transmembrane proteins (T component).</text>
</comment>
<comment type="subcellular location">
    <subcellularLocation>
        <location evidence="1">Cell membrane</location>
        <topology evidence="1">Peripheral membrane protein</topology>
    </subcellularLocation>
</comment>
<comment type="similarity">
    <text evidence="1">Belongs to the ABC transporter superfamily. Energy-coupling factor EcfA family.</text>
</comment>